<keyword id="KW-0067">ATP-binding</keyword>
<keyword id="KW-0131">Cell cycle</keyword>
<keyword id="KW-0132">Cell division</keyword>
<keyword id="KW-0418">Kinase</keyword>
<keyword id="KW-0498">Mitosis</keyword>
<keyword id="KW-0547">Nucleotide-binding</keyword>
<keyword id="KW-0597">Phosphoprotein</keyword>
<keyword id="KW-0723">Serine/threonine-protein kinase</keyword>
<keyword id="KW-0808">Transferase</keyword>
<gene>
    <name type="primary">CDC2</name>
</gene>
<accession>P43290</accession>
<protein>
    <recommendedName>
        <fullName>Cell division control protein 2 homolog</fullName>
        <ecNumber>2.7.11.22</ecNumber>
        <ecNumber>2.7.11.23</ecNumber>
    </recommendedName>
    <alternativeName>
        <fullName>p34cdc2</fullName>
    </alternativeName>
</protein>
<feature type="chain" id="PRO_0000085759" description="Cell division control protein 2 homolog">
    <location>
        <begin position="1" status="less than"/>
        <end position="90" status="greater than"/>
    </location>
</feature>
<feature type="domain" description="Protein kinase" evidence="2">
    <location>
        <begin position="1" status="less than"/>
        <end position="90" status="greater than"/>
    </location>
</feature>
<feature type="active site" description="Proton acceptor" evidence="2 3">
    <location>
        <position position="86"/>
    </location>
</feature>
<feature type="non-terminal residue">
    <location>
        <position position="1"/>
    </location>
</feature>
<feature type="non-terminal residue">
    <location>
        <position position="90"/>
    </location>
</feature>
<sequence length="90" mass="10671">EGVPSTAIREISLLKEMQHANIVRLQDVVHSEKRLYLVFEYLDLDLKKHMDSSPEFSKDPRLVKMFLYQILRGIAYCHSHRVLHRDLKPQ</sequence>
<proteinExistence type="evidence at transcript level"/>
<name>CDC2_PETHY</name>
<organism>
    <name type="scientific">Petunia hybrida</name>
    <name type="common">Petunia</name>
    <dbReference type="NCBI Taxonomy" id="4102"/>
    <lineage>
        <taxon>Eukaryota</taxon>
        <taxon>Viridiplantae</taxon>
        <taxon>Streptophyta</taxon>
        <taxon>Embryophyta</taxon>
        <taxon>Tracheophyta</taxon>
        <taxon>Spermatophyta</taxon>
        <taxon>Magnoliopsida</taxon>
        <taxon>eudicotyledons</taxon>
        <taxon>Gunneridae</taxon>
        <taxon>Pentapetalae</taxon>
        <taxon>asterids</taxon>
        <taxon>lamiids</taxon>
        <taxon>Solanales</taxon>
        <taxon>Solanaceae</taxon>
        <taxon>Petunioideae</taxon>
        <taxon>Petunia</taxon>
    </lineage>
</organism>
<dbReference type="EC" id="2.7.11.22"/>
<dbReference type="EC" id="2.7.11.23"/>
<dbReference type="EMBL" id="X64321">
    <property type="protein sequence ID" value="CAA45606.1"/>
    <property type="molecule type" value="mRNA"/>
</dbReference>
<dbReference type="PIR" id="S28413">
    <property type="entry name" value="S28413"/>
</dbReference>
<dbReference type="SMR" id="P43290"/>
<dbReference type="GO" id="GO:0000307">
    <property type="term" value="C:cyclin-dependent protein kinase holoenzyme complex"/>
    <property type="evidence" value="ECO:0007669"/>
    <property type="project" value="TreeGrafter"/>
</dbReference>
<dbReference type="GO" id="GO:0005737">
    <property type="term" value="C:cytoplasm"/>
    <property type="evidence" value="ECO:0007669"/>
    <property type="project" value="TreeGrafter"/>
</dbReference>
<dbReference type="GO" id="GO:0005634">
    <property type="term" value="C:nucleus"/>
    <property type="evidence" value="ECO:0007669"/>
    <property type="project" value="TreeGrafter"/>
</dbReference>
<dbReference type="GO" id="GO:0005524">
    <property type="term" value="F:ATP binding"/>
    <property type="evidence" value="ECO:0007669"/>
    <property type="project" value="UniProtKB-KW"/>
</dbReference>
<dbReference type="GO" id="GO:0030332">
    <property type="term" value="F:cyclin binding"/>
    <property type="evidence" value="ECO:0007669"/>
    <property type="project" value="TreeGrafter"/>
</dbReference>
<dbReference type="GO" id="GO:0004693">
    <property type="term" value="F:cyclin-dependent protein serine/threonine kinase activity"/>
    <property type="evidence" value="ECO:0007669"/>
    <property type="project" value="UniProtKB-EC"/>
</dbReference>
<dbReference type="GO" id="GO:0106310">
    <property type="term" value="F:protein serine kinase activity"/>
    <property type="evidence" value="ECO:0007669"/>
    <property type="project" value="RHEA"/>
</dbReference>
<dbReference type="GO" id="GO:0008353">
    <property type="term" value="F:RNA polymerase II CTD heptapeptide repeat kinase activity"/>
    <property type="evidence" value="ECO:0007669"/>
    <property type="project" value="UniProtKB-EC"/>
</dbReference>
<dbReference type="GO" id="GO:0051301">
    <property type="term" value="P:cell division"/>
    <property type="evidence" value="ECO:0007669"/>
    <property type="project" value="UniProtKB-KW"/>
</dbReference>
<dbReference type="GO" id="GO:0000082">
    <property type="term" value="P:G1/S transition of mitotic cell cycle"/>
    <property type="evidence" value="ECO:0007669"/>
    <property type="project" value="TreeGrafter"/>
</dbReference>
<dbReference type="GO" id="GO:0010389">
    <property type="term" value="P:regulation of G2/M transition of mitotic cell cycle"/>
    <property type="evidence" value="ECO:0007669"/>
    <property type="project" value="TreeGrafter"/>
</dbReference>
<dbReference type="GO" id="GO:0051445">
    <property type="term" value="P:regulation of meiotic cell cycle"/>
    <property type="evidence" value="ECO:0007669"/>
    <property type="project" value="TreeGrafter"/>
</dbReference>
<dbReference type="GO" id="GO:0007165">
    <property type="term" value="P:signal transduction"/>
    <property type="evidence" value="ECO:0007669"/>
    <property type="project" value="TreeGrafter"/>
</dbReference>
<dbReference type="Gene3D" id="3.30.200.20">
    <property type="entry name" value="Phosphorylase Kinase, domain 1"/>
    <property type="match status" value="1"/>
</dbReference>
<dbReference type="Gene3D" id="1.10.510.10">
    <property type="entry name" value="Transferase(Phosphotransferase) domain 1"/>
    <property type="match status" value="1"/>
</dbReference>
<dbReference type="InterPro" id="IPR050108">
    <property type="entry name" value="CDK"/>
</dbReference>
<dbReference type="InterPro" id="IPR011009">
    <property type="entry name" value="Kinase-like_dom_sf"/>
</dbReference>
<dbReference type="InterPro" id="IPR000719">
    <property type="entry name" value="Prot_kinase_dom"/>
</dbReference>
<dbReference type="PANTHER" id="PTHR24056">
    <property type="entry name" value="CELL DIVISION PROTEIN KINASE"/>
    <property type="match status" value="1"/>
</dbReference>
<dbReference type="PANTHER" id="PTHR24056:SF548">
    <property type="entry name" value="CYCLIN-DEPENDENT KINASE A-1"/>
    <property type="match status" value="1"/>
</dbReference>
<dbReference type="Pfam" id="PF00069">
    <property type="entry name" value="Pkinase"/>
    <property type="match status" value="1"/>
</dbReference>
<dbReference type="SUPFAM" id="SSF56112">
    <property type="entry name" value="Protein kinase-like (PK-like)"/>
    <property type="match status" value="1"/>
</dbReference>
<dbReference type="PROSITE" id="PS50011">
    <property type="entry name" value="PROTEIN_KINASE_DOM"/>
    <property type="match status" value="1"/>
</dbReference>
<comment type="function">
    <text>Plays a key role in the control of the eukaryotic cell cycle. Component of the kinase complex that phosphorylates the repetitive C-terminus of RNA polymerase II.</text>
</comment>
<comment type="catalytic activity">
    <reaction>
        <text>L-seryl-[protein] + ATP = O-phospho-L-seryl-[protein] + ADP + H(+)</text>
        <dbReference type="Rhea" id="RHEA:17989"/>
        <dbReference type="Rhea" id="RHEA-COMP:9863"/>
        <dbReference type="Rhea" id="RHEA-COMP:11604"/>
        <dbReference type="ChEBI" id="CHEBI:15378"/>
        <dbReference type="ChEBI" id="CHEBI:29999"/>
        <dbReference type="ChEBI" id="CHEBI:30616"/>
        <dbReference type="ChEBI" id="CHEBI:83421"/>
        <dbReference type="ChEBI" id="CHEBI:456216"/>
        <dbReference type="EC" id="2.7.11.22"/>
    </reaction>
</comment>
<comment type="catalytic activity">
    <reaction>
        <text>L-threonyl-[protein] + ATP = O-phospho-L-threonyl-[protein] + ADP + H(+)</text>
        <dbReference type="Rhea" id="RHEA:46608"/>
        <dbReference type="Rhea" id="RHEA-COMP:11060"/>
        <dbReference type="Rhea" id="RHEA-COMP:11605"/>
        <dbReference type="ChEBI" id="CHEBI:15378"/>
        <dbReference type="ChEBI" id="CHEBI:30013"/>
        <dbReference type="ChEBI" id="CHEBI:30616"/>
        <dbReference type="ChEBI" id="CHEBI:61977"/>
        <dbReference type="ChEBI" id="CHEBI:456216"/>
        <dbReference type="EC" id="2.7.11.22"/>
    </reaction>
</comment>
<comment type="catalytic activity">
    <reaction>
        <text>[DNA-directed RNA polymerase] + ATP = phospho-[DNA-directed RNA polymerase] + ADP + H(+)</text>
        <dbReference type="Rhea" id="RHEA:10216"/>
        <dbReference type="Rhea" id="RHEA-COMP:11321"/>
        <dbReference type="Rhea" id="RHEA-COMP:11322"/>
        <dbReference type="ChEBI" id="CHEBI:15378"/>
        <dbReference type="ChEBI" id="CHEBI:30616"/>
        <dbReference type="ChEBI" id="CHEBI:43176"/>
        <dbReference type="ChEBI" id="CHEBI:68546"/>
        <dbReference type="ChEBI" id="CHEBI:456216"/>
        <dbReference type="EC" id="2.7.11.23"/>
    </reaction>
</comment>
<comment type="activity regulation">
    <text evidence="1">Phosphorylation inactivates the enzyme.</text>
</comment>
<comment type="tissue specificity">
    <text>Differentially expressed in leaves, protoplasts.</text>
</comment>
<comment type="similarity">
    <text evidence="4">Belongs to the protein kinase superfamily. CMGC Ser/Thr protein kinase family. CDC2/CDKX subfamily.</text>
</comment>
<evidence type="ECO:0000250" key="1"/>
<evidence type="ECO:0000255" key="2">
    <source>
        <dbReference type="PROSITE-ProRule" id="PRU00159"/>
    </source>
</evidence>
<evidence type="ECO:0000255" key="3">
    <source>
        <dbReference type="PROSITE-ProRule" id="PRU10027"/>
    </source>
</evidence>
<evidence type="ECO:0000305" key="4"/>
<reference key="1">
    <citation type="journal article" date="1992" name="Plant Mol. Biol.">
        <title>A cdc2 gene of Petunia hybrida is differentially expressed in leaves, protoplasts and during various cell cycle phases.</title>
        <authorList>
            <person name="Bergounioux C."/>
            <person name="Perennes C."/>
            <person name="Hemerly A.S."/>
            <person name="Qin L.X."/>
            <person name="Sarda C."/>
            <person name="Inze D."/>
            <person name="Gadal P."/>
        </authorList>
    </citation>
    <scope>NUCLEOTIDE SEQUENCE [MRNA]</scope>
    <source>
        <strain>cv. P X PC6</strain>
    </source>
</reference>